<keyword id="KW-0378">Hydrolase</keyword>
<protein>
    <recommendedName>
        <fullName evidence="1">RNA pyrophosphohydrolase</fullName>
        <ecNumber evidence="1">3.6.1.-</ecNumber>
    </recommendedName>
    <alternativeName>
        <fullName evidence="1">(Di)nucleoside polyphosphate hydrolase</fullName>
    </alternativeName>
</protein>
<reference key="1">
    <citation type="journal article" date="2006" name="PLoS Genet.">
        <title>The complete genome sequence and comparative genome analysis of the high pathogenicity Yersinia enterocolitica strain 8081.</title>
        <authorList>
            <person name="Thomson N.R."/>
            <person name="Howard S."/>
            <person name="Wren B.W."/>
            <person name="Holden M.T.G."/>
            <person name="Crossman L."/>
            <person name="Challis G.L."/>
            <person name="Churcher C."/>
            <person name="Mungall K."/>
            <person name="Brooks K."/>
            <person name="Chillingworth T."/>
            <person name="Feltwell T."/>
            <person name="Abdellah Z."/>
            <person name="Hauser H."/>
            <person name="Jagels K."/>
            <person name="Maddison M."/>
            <person name="Moule S."/>
            <person name="Sanders M."/>
            <person name="Whitehead S."/>
            <person name="Quail M.A."/>
            <person name="Dougan G."/>
            <person name="Parkhill J."/>
            <person name="Prentice M.B."/>
        </authorList>
    </citation>
    <scope>NUCLEOTIDE SEQUENCE [LARGE SCALE GENOMIC DNA]</scope>
    <source>
        <strain>NCTC 13174 / 8081</strain>
    </source>
</reference>
<proteinExistence type="inferred from homology"/>
<organism>
    <name type="scientific">Yersinia enterocolitica serotype O:8 / biotype 1B (strain NCTC 13174 / 8081)</name>
    <dbReference type="NCBI Taxonomy" id="393305"/>
    <lineage>
        <taxon>Bacteria</taxon>
        <taxon>Pseudomonadati</taxon>
        <taxon>Pseudomonadota</taxon>
        <taxon>Gammaproteobacteria</taxon>
        <taxon>Enterobacterales</taxon>
        <taxon>Yersiniaceae</taxon>
        <taxon>Yersinia</taxon>
    </lineage>
</organism>
<feature type="chain" id="PRO_1000022008" description="RNA pyrophosphohydrolase">
    <location>
        <begin position="1"/>
        <end position="175"/>
    </location>
</feature>
<feature type="domain" description="Nudix hydrolase" evidence="1">
    <location>
        <begin position="6"/>
        <end position="149"/>
    </location>
</feature>
<feature type="short sequence motif" description="Nudix box">
    <location>
        <begin position="38"/>
        <end position="59"/>
    </location>
</feature>
<dbReference type="EC" id="3.6.1.-" evidence="1"/>
<dbReference type="EMBL" id="AM286415">
    <property type="protein sequence ID" value="CAL13349.1"/>
    <property type="molecule type" value="Genomic_DNA"/>
</dbReference>
<dbReference type="RefSeq" id="WP_005165374.1">
    <property type="nucleotide sequence ID" value="NC_008800.1"/>
</dbReference>
<dbReference type="RefSeq" id="YP_001007493.1">
    <property type="nucleotide sequence ID" value="NC_008800.1"/>
</dbReference>
<dbReference type="SMR" id="A1JPE1"/>
<dbReference type="GeneID" id="97454909"/>
<dbReference type="KEGG" id="yen:YE3320"/>
<dbReference type="PATRIC" id="fig|393305.7.peg.3529"/>
<dbReference type="eggNOG" id="COG1051">
    <property type="taxonomic scope" value="Bacteria"/>
</dbReference>
<dbReference type="HOGENOM" id="CLU_087195_3_2_6"/>
<dbReference type="OrthoDB" id="9816040at2"/>
<dbReference type="Proteomes" id="UP000000642">
    <property type="component" value="Chromosome"/>
</dbReference>
<dbReference type="GO" id="GO:0005737">
    <property type="term" value="C:cytoplasm"/>
    <property type="evidence" value="ECO:0007669"/>
    <property type="project" value="TreeGrafter"/>
</dbReference>
<dbReference type="GO" id="GO:0034353">
    <property type="term" value="F:mRNA 5'-diphosphatase activity"/>
    <property type="evidence" value="ECO:0007669"/>
    <property type="project" value="TreeGrafter"/>
</dbReference>
<dbReference type="GO" id="GO:0006402">
    <property type="term" value="P:mRNA catabolic process"/>
    <property type="evidence" value="ECO:0007669"/>
    <property type="project" value="TreeGrafter"/>
</dbReference>
<dbReference type="CDD" id="cd03671">
    <property type="entry name" value="NUDIX_Ap4A_hydrolase_plant_like"/>
    <property type="match status" value="1"/>
</dbReference>
<dbReference type="FunFam" id="3.90.79.10:FF:000001">
    <property type="entry name" value="RNA pyrophosphohydrolase"/>
    <property type="match status" value="1"/>
</dbReference>
<dbReference type="Gene3D" id="3.90.79.10">
    <property type="entry name" value="Nucleoside Triphosphate Pyrophosphohydrolase"/>
    <property type="match status" value="1"/>
</dbReference>
<dbReference type="HAMAP" id="MF_00298">
    <property type="entry name" value="Nudix_RppH"/>
    <property type="match status" value="1"/>
</dbReference>
<dbReference type="InterPro" id="IPR020476">
    <property type="entry name" value="Nudix_hydrolase"/>
</dbReference>
<dbReference type="InterPro" id="IPR015797">
    <property type="entry name" value="NUDIX_hydrolase-like_dom_sf"/>
</dbReference>
<dbReference type="InterPro" id="IPR020084">
    <property type="entry name" value="NUDIX_hydrolase_CS"/>
</dbReference>
<dbReference type="InterPro" id="IPR000086">
    <property type="entry name" value="NUDIX_hydrolase_dom"/>
</dbReference>
<dbReference type="InterPro" id="IPR022927">
    <property type="entry name" value="RppH"/>
</dbReference>
<dbReference type="NCBIfam" id="NF001934">
    <property type="entry name" value="PRK00714.1-1"/>
    <property type="match status" value="1"/>
</dbReference>
<dbReference type="NCBIfam" id="NF001937">
    <property type="entry name" value="PRK00714.1-4"/>
    <property type="match status" value="1"/>
</dbReference>
<dbReference type="NCBIfam" id="NF001938">
    <property type="entry name" value="PRK00714.1-5"/>
    <property type="match status" value="1"/>
</dbReference>
<dbReference type="PANTHER" id="PTHR23114">
    <property type="entry name" value="M7GPPPN-MRNA HYDROLASE"/>
    <property type="match status" value="1"/>
</dbReference>
<dbReference type="PANTHER" id="PTHR23114:SF17">
    <property type="entry name" value="M7GPPPN-MRNA HYDROLASE"/>
    <property type="match status" value="1"/>
</dbReference>
<dbReference type="Pfam" id="PF00293">
    <property type="entry name" value="NUDIX"/>
    <property type="match status" value="1"/>
</dbReference>
<dbReference type="PRINTS" id="PR00502">
    <property type="entry name" value="NUDIXFAMILY"/>
</dbReference>
<dbReference type="SUPFAM" id="SSF55811">
    <property type="entry name" value="Nudix"/>
    <property type="match status" value="1"/>
</dbReference>
<dbReference type="PROSITE" id="PS51462">
    <property type="entry name" value="NUDIX"/>
    <property type="match status" value="1"/>
</dbReference>
<dbReference type="PROSITE" id="PS00893">
    <property type="entry name" value="NUDIX_BOX"/>
    <property type="match status" value="1"/>
</dbReference>
<name>RPPH_YERE8</name>
<sequence length="175" mass="20877">MIDDDGYRPNVGIVICNRQGEVLWARRYGQHSWQFPQGGINPGETPEQAMYRELFEEVGLNKKDVRILASTRNWLRYKLPKRLVRWDTKPVCIGQKQRWFLLQLMCNEADINMQRSSTPEFDGWRWVSYWYPVRQVVSFKRDVYRRVMKEFAPTVMPVQEAAPPRVPPAYRRKRG</sequence>
<evidence type="ECO:0000255" key="1">
    <source>
        <dbReference type="HAMAP-Rule" id="MF_00298"/>
    </source>
</evidence>
<accession>A1JPE1</accession>
<comment type="function">
    <text evidence="1">Accelerates the degradation of transcripts by removing pyrophosphate from the 5'-end of triphosphorylated RNA, leading to a more labile monophosphorylated state that can stimulate subsequent ribonuclease cleavage.</text>
</comment>
<comment type="cofactor">
    <cofactor evidence="1">
        <name>a divalent metal cation</name>
        <dbReference type="ChEBI" id="CHEBI:60240"/>
    </cofactor>
</comment>
<comment type="similarity">
    <text evidence="1">Belongs to the Nudix hydrolase family. RppH subfamily.</text>
</comment>
<gene>
    <name evidence="1" type="primary">rppH</name>
    <name evidence="1" type="synonym">nudH</name>
    <name type="ordered locus">YE3320</name>
</gene>